<accession>A8FJR0</accession>
<dbReference type="EC" id="7.1.2.2" evidence="1"/>
<dbReference type="EMBL" id="CP000814">
    <property type="protein sequence ID" value="ABV51697.1"/>
    <property type="molecule type" value="Genomic_DNA"/>
</dbReference>
<dbReference type="RefSeq" id="WP_002851836.1">
    <property type="nucleotide sequence ID" value="NC_009839.1"/>
</dbReference>
<dbReference type="SMR" id="A8FJR0"/>
<dbReference type="KEGG" id="cju:C8J_0098"/>
<dbReference type="HOGENOM" id="CLU_010091_2_1_7"/>
<dbReference type="GO" id="GO:0005886">
    <property type="term" value="C:plasma membrane"/>
    <property type="evidence" value="ECO:0007669"/>
    <property type="project" value="UniProtKB-SubCell"/>
</dbReference>
<dbReference type="GO" id="GO:0045259">
    <property type="term" value="C:proton-transporting ATP synthase complex"/>
    <property type="evidence" value="ECO:0007669"/>
    <property type="project" value="UniProtKB-KW"/>
</dbReference>
<dbReference type="GO" id="GO:0043531">
    <property type="term" value="F:ADP binding"/>
    <property type="evidence" value="ECO:0007669"/>
    <property type="project" value="TreeGrafter"/>
</dbReference>
<dbReference type="GO" id="GO:0005524">
    <property type="term" value="F:ATP binding"/>
    <property type="evidence" value="ECO:0007669"/>
    <property type="project" value="UniProtKB-UniRule"/>
</dbReference>
<dbReference type="GO" id="GO:0046933">
    <property type="term" value="F:proton-transporting ATP synthase activity, rotational mechanism"/>
    <property type="evidence" value="ECO:0007669"/>
    <property type="project" value="UniProtKB-UniRule"/>
</dbReference>
<dbReference type="CDD" id="cd18113">
    <property type="entry name" value="ATP-synt_F1_alpha_C"/>
    <property type="match status" value="1"/>
</dbReference>
<dbReference type="CDD" id="cd18116">
    <property type="entry name" value="ATP-synt_F1_alpha_N"/>
    <property type="match status" value="1"/>
</dbReference>
<dbReference type="CDD" id="cd01132">
    <property type="entry name" value="F1-ATPase_alpha_CD"/>
    <property type="match status" value="1"/>
</dbReference>
<dbReference type="FunFam" id="1.20.150.20:FF:000001">
    <property type="entry name" value="ATP synthase subunit alpha"/>
    <property type="match status" value="1"/>
</dbReference>
<dbReference type="FunFam" id="2.40.30.20:FF:000001">
    <property type="entry name" value="ATP synthase subunit alpha"/>
    <property type="match status" value="1"/>
</dbReference>
<dbReference type="FunFam" id="3.40.50.300:FF:000002">
    <property type="entry name" value="ATP synthase subunit alpha"/>
    <property type="match status" value="1"/>
</dbReference>
<dbReference type="Gene3D" id="2.40.30.20">
    <property type="match status" value="1"/>
</dbReference>
<dbReference type="Gene3D" id="1.20.150.20">
    <property type="entry name" value="ATP synthase alpha/beta chain, C-terminal domain"/>
    <property type="match status" value="1"/>
</dbReference>
<dbReference type="Gene3D" id="3.40.50.300">
    <property type="entry name" value="P-loop containing nucleotide triphosphate hydrolases"/>
    <property type="match status" value="1"/>
</dbReference>
<dbReference type="HAMAP" id="MF_01346">
    <property type="entry name" value="ATP_synth_alpha_bact"/>
    <property type="match status" value="1"/>
</dbReference>
<dbReference type="InterPro" id="IPR023366">
    <property type="entry name" value="ATP_synth_asu-like_sf"/>
</dbReference>
<dbReference type="InterPro" id="IPR000793">
    <property type="entry name" value="ATP_synth_asu_C"/>
</dbReference>
<dbReference type="InterPro" id="IPR038376">
    <property type="entry name" value="ATP_synth_asu_C_sf"/>
</dbReference>
<dbReference type="InterPro" id="IPR033732">
    <property type="entry name" value="ATP_synth_F1_a_nt-bd_dom"/>
</dbReference>
<dbReference type="InterPro" id="IPR005294">
    <property type="entry name" value="ATP_synth_F1_asu"/>
</dbReference>
<dbReference type="InterPro" id="IPR020003">
    <property type="entry name" value="ATPase_a/bsu_AS"/>
</dbReference>
<dbReference type="InterPro" id="IPR004100">
    <property type="entry name" value="ATPase_F1/V1/A1_a/bsu_N"/>
</dbReference>
<dbReference type="InterPro" id="IPR036121">
    <property type="entry name" value="ATPase_F1/V1/A1_a/bsu_N_sf"/>
</dbReference>
<dbReference type="InterPro" id="IPR000194">
    <property type="entry name" value="ATPase_F1/V1/A1_a/bsu_nucl-bd"/>
</dbReference>
<dbReference type="InterPro" id="IPR027417">
    <property type="entry name" value="P-loop_NTPase"/>
</dbReference>
<dbReference type="NCBIfam" id="TIGR00962">
    <property type="entry name" value="atpA"/>
    <property type="match status" value="1"/>
</dbReference>
<dbReference type="NCBIfam" id="NF009884">
    <property type="entry name" value="PRK13343.1"/>
    <property type="match status" value="1"/>
</dbReference>
<dbReference type="PANTHER" id="PTHR48082">
    <property type="entry name" value="ATP SYNTHASE SUBUNIT ALPHA, MITOCHONDRIAL"/>
    <property type="match status" value="1"/>
</dbReference>
<dbReference type="PANTHER" id="PTHR48082:SF2">
    <property type="entry name" value="ATP SYNTHASE SUBUNIT ALPHA, MITOCHONDRIAL"/>
    <property type="match status" value="1"/>
</dbReference>
<dbReference type="Pfam" id="PF00006">
    <property type="entry name" value="ATP-synt_ab"/>
    <property type="match status" value="1"/>
</dbReference>
<dbReference type="Pfam" id="PF00306">
    <property type="entry name" value="ATP-synt_ab_C"/>
    <property type="match status" value="1"/>
</dbReference>
<dbReference type="Pfam" id="PF02874">
    <property type="entry name" value="ATP-synt_ab_N"/>
    <property type="match status" value="1"/>
</dbReference>
<dbReference type="PIRSF" id="PIRSF039088">
    <property type="entry name" value="F_ATPase_subunit_alpha"/>
    <property type="match status" value="1"/>
</dbReference>
<dbReference type="SUPFAM" id="SSF47917">
    <property type="entry name" value="C-terminal domain of alpha and beta subunits of F1 ATP synthase"/>
    <property type="match status" value="1"/>
</dbReference>
<dbReference type="SUPFAM" id="SSF50615">
    <property type="entry name" value="N-terminal domain of alpha and beta subunits of F1 ATP synthase"/>
    <property type="match status" value="1"/>
</dbReference>
<dbReference type="SUPFAM" id="SSF52540">
    <property type="entry name" value="P-loop containing nucleoside triphosphate hydrolases"/>
    <property type="match status" value="1"/>
</dbReference>
<dbReference type="PROSITE" id="PS00152">
    <property type="entry name" value="ATPASE_ALPHA_BETA"/>
    <property type="match status" value="1"/>
</dbReference>
<protein>
    <recommendedName>
        <fullName evidence="1">ATP synthase subunit alpha</fullName>
        <ecNumber evidence="1">7.1.2.2</ecNumber>
    </recommendedName>
    <alternativeName>
        <fullName evidence="1">ATP synthase F1 sector subunit alpha</fullName>
    </alternativeName>
    <alternativeName>
        <fullName evidence="1">F-ATPase subunit alpha</fullName>
    </alternativeName>
</protein>
<feature type="chain" id="PRO_1000073351" description="ATP synthase subunit alpha">
    <location>
        <begin position="1"/>
        <end position="501"/>
    </location>
</feature>
<feature type="binding site" evidence="1">
    <location>
        <begin position="169"/>
        <end position="176"/>
    </location>
    <ligand>
        <name>ATP</name>
        <dbReference type="ChEBI" id="CHEBI:30616"/>
    </ligand>
</feature>
<feature type="site" description="Required for activity" evidence="1">
    <location>
        <position position="362"/>
    </location>
</feature>
<proteinExistence type="inferred from homology"/>
<comment type="function">
    <text evidence="1">Produces ATP from ADP in the presence of a proton gradient across the membrane. The alpha chain is a regulatory subunit.</text>
</comment>
<comment type="catalytic activity">
    <reaction evidence="1">
        <text>ATP + H2O + 4 H(+)(in) = ADP + phosphate + 5 H(+)(out)</text>
        <dbReference type="Rhea" id="RHEA:57720"/>
        <dbReference type="ChEBI" id="CHEBI:15377"/>
        <dbReference type="ChEBI" id="CHEBI:15378"/>
        <dbReference type="ChEBI" id="CHEBI:30616"/>
        <dbReference type="ChEBI" id="CHEBI:43474"/>
        <dbReference type="ChEBI" id="CHEBI:456216"/>
        <dbReference type="EC" id="7.1.2.2"/>
    </reaction>
</comment>
<comment type="subunit">
    <text evidence="1">F-type ATPases have 2 components, CF(1) - the catalytic core - and CF(0) - the membrane proton channel. CF(1) has five subunits: alpha(3), beta(3), gamma(1), delta(1), epsilon(1). CF(0) has three main subunits: a(1), b(2) and c(9-12). The alpha and beta chains form an alternating ring which encloses part of the gamma chain. CF(1) is attached to CF(0) by a central stalk formed by the gamma and epsilon chains, while a peripheral stalk is formed by the delta and b chains.</text>
</comment>
<comment type="subcellular location">
    <subcellularLocation>
        <location evidence="1">Cell inner membrane</location>
        <topology evidence="1">Peripheral membrane protein</topology>
    </subcellularLocation>
</comment>
<comment type="similarity">
    <text evidence="1">Belongs to the ATPase alpha/beta chains family.</text>
</comment>
<keyword id="KW-0066">ATP synthesis</keyword>
<keyword id="KW-0067">ATP-binding</keyword>
<keyword id="KW-0997">Cell inner membrane</keyword>
<keyword id="KW-1003">Cell membrane</keyword>
<keyword id="KW-0139">CF(1)</keyword>
<keyword id="KW-0375">Hydrogen ion transport</keyword>
<keyword id="KW-0406">Ion transport</keyword>
<keyword id="KW-0472">Membrane</keyword>
<keyword id="KW-0547">Nucleotide-binding</keyword>
<keyword id="KW-1278">Translocase</keyword>
<keyword id="KW-0813">Transport</keyword>
<reference key="1">
    <citation type="journal article" date="2007" name="J. Bacteriol.">
        <title>The complete genome sequence of Campylobacter jejuni strain 81116 (NCTC11828).</title>
        <authorList>
            <person name="Pearson B.M."/>
            <person name="Gaskin D.J.H."/>
            <person name="Segers R.P.A.M."/>
            <person name="Wells J.M."/>
            <person name="Nuijten P.J.M."/>
            <person name="van Vliet A.H.M."/>
        </authorList>
    </citation>
    <scope>NUCLEOTIDE SEQUENCE [LARGE SCALE GENOMIC DNA]</scope>
    <source>
        <strain>81116 / NCTC 11828</strain>
    </source>
</reference>
<organism>
    <name type="scientific">Campylobacter jejuni subsp. jejuni serotype O:6 (strain 81116 / NCTC 11828)</name>
    <dbReference type="NCBI Taxonomy" id="407148"/>
    <lineage>
        <taxon>Bacteria</taxon>
        <taxon>Pseudomonadati</taxon>
        <taxon>Campylobacterota</taxon>
        <taxon>Epsilonproteobacteria</taxon>
        <taxon>Campylobacterales</taxon>
        <taxon>Campylobacteraceae</taxon>
        <taxon>Campylobacter</taxon>
    </lineage>
</organism>
<evidence type="ECO:0000255" key="1">
    <source>
        <dbReference type="HAMAP-Rule" id="MF_01346"/>
    </source>
</evidence>
<gene>
    <name evidence="1" type="primary">atpA</name>
    <name type="ordered locus">C8J_0098</name>
</gene>
<sequence length="501" mass="54801">MKFKADEISSIIKERIENFDLNLEIEETGKIISVADGVAKVYGLKNIMAGEMVEFENGDKGMALNLEESSVGIVILGKGEGLKEGASVKRLKKLLKVPVGEALIGRVVNALGEPIDAKGVINANEYRFVEEKAKGIMARKSVHEPLHTGIKAIDALVPIGRGQRELIIGDRQTGKTTVAVDTIISQRGQGVICIYVAIGQKQSTVAQVVKRLEEHGAMEYTIVVNAGASDPAALQYLAPYTGVTMGEFFRDNAKHALIVYDDLSKHAVAYREMSLILRRPPGREAYPGDVFYLHSRLLERASKLNDELGAGSLTALPIIETQAGDVSAYIPTNVISITDGQIFLETDLFNSGIRPAINVGLSVSRVGGAAQIKATKQVSGTLRLDLAQYRELQAFAQFASDLDEASRKQLERGQRMVELLKQPPYSPLSVEKQVVLIFAGTKGFLDDIAVSRIKEFEDGIYPFIEAKHPDIFEQIRSKKALDSDLEEKLAKAINEFKANHL</sequence>
<name>ATPA_CAMJ8</name>